<gene>
    <name type="primary">Lgr5</name>
    <name evidence="12" type="synonym">Fex</name>
    <name type="synonym">Gpr49</name>
</gene>
<sequence>MDTSCVHMLLSLLALLQLVAAGSSPGPDAIPRGCPSHCHCELDGRMLLRVDCSDLGLSELPSNLSVFTSYLDLSMNNISQLPASLLHRLCFLEELRLAGNALTHIPKGAFTGLHSLKVLMLQNNQLRQVPEEALQNLRSLQSLRLDANHISYVPPSCFSGLHSLRHLWLDDNALTDVPVQAFRSLSALQAMTLALNKIHHIADYAFGNLSSLVVLHLHNNRIHSLGKKCFDGLHSLETLDLNYNNLDEFPTAIKTLSNLKELGFHSNNIRSIPERAFVGNPSLITIHFYDNPIQFVGVSAFQHLPELRTLTLNGASHITEFPHLTGTATLESLTLTGAKISSLPQAVCDQLPNLQVLDLSYNLLEDLPSLSGCQKLQKIDLRHNEIYEIKGSTFQQLFNLRSLNLAWNKIAIIHPNAFSTLPSLIKLDLSSNLLSSFPVTGLHGLTHLKLTGNRALQSLIPSANFPELKIIEMPSAYQCCAFGGCENVYKISNQWNKDDGNSVDDLHKKDAGLFQVQDERDLEDFLLDFEEDLKALHSVQCSPSPGPFKPCEHLFGSWLIRIGVWTTAVLALSCNALVALTVFRTPLYISSIKLLIGVIAVVDILMGVSSAVLAAVDAFTFGRFAQHGAWWEDGIGCQIVGFLSIFASESSIFLLTLAALERGFSVKCSSKFEVKAPLFSLRAIVLLCVLLALTIATIPLLGGSKYNASPLCLPLPFGEPSTTGYMVALVLLNSLCFLIMTIAYTKLYCSLEKGELENLWDCSMVKHIALLLFANCILYCPVAFLSFSSLLNLTFISPDVIKFILLVIVPLPSCLNPLLYIVFNPHFKEDMGSLGKHTRFWMRSKHASLLSINSDDVEKRSCESTQALVSFTHASIAYDLPSTSGASPAYPMTESCHLSSVAFVPCL</sequence>
<proteinExistence type="evidence at protein level"/>
<reference key="1">
    <citation type="journal article" date="1999" name="Biochem. Biophys. Res. Commun.">
        <title>Identification of a novel seven-transmembrane receptor with homology to glycoprotein receptors and its expression in the adult and developing mouse.</title>
        <authorList>
            <person name="Hermey G."/>
            <person name="Methner A."/>
            <person name="Schaller H.C."/>
            <person name="Hermans-Borgmeyer I."/>
        </authorList>
    </citation>
    <scope>NUCLEOTIDE SEQUENCE [MRNA]</scope>
    <scope>TISSUE SPECIFICITY</scope>
    <scope>DEVELOPMENTAL STAGE</scope>
    <source>
        <tissue>Brain</tissue>
    </source>
</reference>
<reference key="2">
    <citation type="journal article" date="2005" name="Science">
        <title>The transcriptional landscape of the mammalian genome.</title>
        <authorList>
            <person name="Carninci P."/>
            <person name="Kasukawa T."/>
            <person name="Katayama S."/>
            <person name="Gough J."/>
            <person name="Frith M.C."/>
            <person name="Maeda N."/>
            <person name="Oyama R."/>
            <person name="Ravasi T."/>
            <person name="Lenhard B."/>
            <person name="Wells C."/>
            <person name="Kodzius R."/>
            <person name="Shimokawa K."/>
            <person name="Bajic V.B."/>
            <person name="Brenner S.E."/>
            <person name="Batalov S."/>
            <person name="Forrest A.R."/>
            <person name="Zavolan M."/>
            <person name="Davis M.J."/>
            <person name="Wilming L.G."/>
            <person name="Aidinis V."/>
            <person name="Allen J.E."/>
            <person name="Ambesi-Impiombato A."/>
            <person name="Apweiler R."/>
            <person name="Aturaliya R.N."/>
            <person name="Bailey T.L."/>
            <person name="Bansal M."/>
            <person name="Baxter L."/>
            <person name="Beisel K.W."/>
            <person name="Bersano T."/>
            <person name="Bono H."/>
            <person name="Chalk A.M."/>
            <person name="Chiu K.P."/>
            <person name="Choudhary V."/>
            <person name="Christoffels A."/>
            <person name="Clutterbuck D.R."/>
            <person name="Crowe M.L."/>
            <person name="Dalla E."/>
            <person name="Dalrymple B.P."/>
            <person name="de Bono B."/>
            <person name="Della Gatta G."/>
            <person name="di Bernardo D."/>
            <person name="Down T."/>
            <person name="Engstrom P."/>
            <person name="Fagiolini M."/>
            <person name="Faulkner G."/>
            <person name="Fletcher C.F."/>
            <person name="Fukushima T."/>
            <person name="Furuno M."/>
            <person name="Futaki S."/>
            <person name="Gariboldi M."/>
            <person name="Georgii-Hemming P."/>
            <person name="Gingeras T.R."/>
            <person name="Gojobori T."/>
            <person name="Green R.E."/>
            <person name="Gustincich S."/>
            <person name="Harbers M."/>
            <person name="Hayashi Y."/>
            <person name="Hensch T.K."/>
            <person name="Hirokawa N."/>
            <person name="Hill D."/>
            <person name="Huminiecki L."/>
            <person name="Iacono M."/>
            <person name="Ikeo K."/>
            <person name="Iwama A."/>
            <person name="Ishikawa T."/>
            <person name="Jakt M."/>
            <person name="Kanapin A."/>
            <person name="Katoh M."/>
            <person name="Kawasawa Y."/>
            <person name="Kelso J."/>
            <person name="Kitamura H."/>
            <person name="Kitano H."/>
            <person name="Kollias G."/>
            <person name="Krishnan S.P."/>
            <person name="Kruger A."/>
            <person name="Kummerfeld S.K."/>
            <person name="Kurochkin I.V."/>
            <person name="Lareau L.F."/>
            <person name="Lazarevic D."/>
            <person name="Lipovich L."/>
            <person name="Liu J."/>
            <person name="Liuni S."/>
            <person name="McWilliam S."/>
            <person name="Madan Babu M."/>
            <person name="Madera M."/>
            <person name="Marchionni L."/>
            <person name="Matsuda H."/>
            <person name="Matsuzawa S."/>
            <person name="Miki H."/>
            <person name="Mignone F."/>
            <person name="Miyake S."/>
            <person name="Morris K."/>
            <person name="Mottagui-Tabar S."/>
            <person name="Mulder N."/>
            <person name="Nakano N."/>
            <person name="Nakauchi H."/>
            <person name="Ng P."/>
            <person name="Nilsson R."/>
            <person name="Nishiguchi S."/>
            <person name="Nishikawa S."/>
            <person name="Nori F."/>
            <person name="Ohara O."/>
            <person name="Okazaki Y."/>
            <person name="Orlando V."/>
            <person name="Pang K.C."/>
            <person name="Pavan W.J."/>
            <person name="Pavesi G."/>
            <person name="Pesole G."/>
            <person name="Petrovsky N."/>
            <person name="Piazza S."/>
            <person name="Reed J."/>
            <person name="Reid J.F."/>
            <person name="Ring B.Z."/>
            <person name="Ringwald M."/>
            <person name="Rost B."/>
            <person name="Ruan Y."/>
            <person name="Salzberg S.L."/>
            <person name="Sandelin A."/>
            <person name="Schneider C."/>
            <person name="Schoenbach C."/>
            <person name="Sekiguchi K."/>
            <person name="Semple C.A."/>
            <person name="Seno S."/>
            <person name="Sessa L."/>
            <person name="Sheng Y."/>
            <person name="Shibata Y."/>
            <person name="Shimada H."/>
            <person name="Shimada K."/>
            <person name="Silva D."/>
            <person name="Sinclair B."/>
            <person name="Sperling S."/>
            <person name="Stupka E."/>
            <person name="Sugiura K."/>
            <person name="Sultana R."/>
            <person name="Takenaka Y."/>
            <person name="Taki K."/>
            <person name="Tammoja K."/>
            <person name="Tan S.L."/>
            <person name="Tang S."/>
            <person name="Taylor M.S."/>
            <person name="Tegner J."/>
            <person name="Teichmann S.A."/>
            <person name="Ueda H.R."/>
            <person name="van Nimwegen E."/>
            <person name="Verardo R."/>
            <person name="Wei C.L."/>
            <person name="Yagi K."/>
            <person name="Yamanishi H."/>
            <person name="Zabarovsky E."/>
            <person name="Zhu S."/>
            <person name="Zimmer A."/>
            <person name="Hide W."/>
            <person name="Bult C."/>
            <person name="Grimmond S.M."/>
            <person name="Teasdale R.D."/>
            <person name="Liu E.T."/>
            <person name="Brusic V."/>
            <person name="Quackenbush J."/>
            <person name="Wahlestedt C."/>
            <person name="Mattick J.S."/>
            <person name="Hume D.A."/>
            <person name="Kai C."/>
            <person name="Sasaki D."/>
            <person name="Tomaru Y."/>
            <person name="Fukuda S."/>
            <person name="Kanamori-Katayama M."/>
            <person name="Suzuki M."/>
            <person name="Aoki J."/>
            <person name="Arakawa T."/>
            <person name="Iida J."/>
            <person name="Imamura K."/>
            <person name="Itoh M."/>
            <person name="Kato T."/>
            <person name="Kawaji H."/>
            <person name="Kawagashira N."/>
            <person name="Kawashima T."/>
            <person name="Kojima M."/>
            <person name="Kondo S."/>
            <person name="Konno H."/>
            <person name="Nakano K."/>
            <person name="Ninomiya N."/>
            <person name="Nishio T."/>
            <person name="Okada M."/>
            <person name="Plessy C."/>
            <person name="Shibata K."/>
            <person name="Shiraki T."/>
            <person name="Suzuki S."/>
            <person name="Tagami M."/>
            <person name="Waki K."/>
            <person name="Watahiki A."/>
            <person name="Okamura-Oho Y."/>
            <person name="Suzuki H."/>
            <person name="Kawai J."/>
            <person name="Hayashizaki Y."/>
        </authorList>
    </citation>
    <scope>NUCLEOTIDE SEQUENCE [LARGE SCALE MRNA]</scope>
    <source>
        <strain>C57BL/6J</strain>
        <tissue>Head</tissue>
    </source>
</reference>
<reference key="3">
    <citation type="submission" date="2005-07" db="EMBL/GenBank/DDBJ databases">
        <authorList>
            <person name="Mural R.J."/>
            <person name="Adams M.D."/>
            <person name="Myers E.W."/>
            <person name="Smith H.O."/>
            <person name="Venter J.C."/>
        </authorList>
    </citation>
    <scope>NUCLEOTIDE SEQUENCE [LARGE SCALE GENOMIC DNA]</scope>
</reference>
<reference key="4">
    <citation type="journal article" date="2004" name="Mol. Cell. Biol.">
        <title>Neonatal lethality of LGR5 null mice is associated with ankyloglossia and gastrointestinal distension.</title>
        <authorList>
            <person name="Morita H."/>
            <person name="Mazerbourg S."/>
            <person name="Bouley D.M."/>
            <person name="Luo C.W."/>
            <person name="Kawamura K."/>
            <person name="Kuwabara Y."/>
            <person name="Baribault H."/>
            <person name="Tian H."/>
            <person name="Hsueh A.J."/>
        </authorList>
    </citation>
    <scope>DISRUPTION PHENOTYPE</scope>
</reference>
<reference key="5">
    <citation type="journal article" date="2007" name="Nature">
        <title>Identification of stem cells in small intestine and colon by marker gene Lgr5.</title>
        <authorList>
            <person name="Barker N."/>
            <person name="van Es J.H."/>
            <person name="Kuipers J."/>
            <person name="Kujala P."/>
            <person name="van den Born M."/>
            <person name="Cozijnsen M."/>
            <person name="Haegebarth A."/>
            <person name="Korving J."/>
            <person name="Begthel H."/>
            <person name="Peters P.J."/>
            <person name="Clevers H."/>
        </authorList>
    </citation>
    <scope>TISSUE SPECIFICITY</scope>
</reference>
<reference key="6">
    <citation type="journal article" date="2008" name="Nat. Genet.">
        <title>Lgr5 marks cycling, yet long-lived, hair follicle stem cells.</title>
        <authorList>
            <person name="Jaks V."/>
            <person name="Barker N."/>
            <person name="Kasper M."/>
            <person name="van Es J.H."/>
            <person name="Snippert H.J."/>
            <person name="Clevers H."/>
            <person name="Toftgard R."/>
        </authorList>
    </citation>
    <scope>TISSUE SPECIFICITY</scope>
</reference>
<reference key="7">
    <citation type="journal article" date="2011" name="Nature">
        <title>Lgr5 homologues associate with Wnt receptors and mediate R-spondin signalling.</title>
        <authorList>
            <person name="de Lau W."/>
            <person name="Barker N."/>
            <person name="Low T.Y."/>
            <person name="Koo B.K."/>
            <person name="Li V.S."/>
            <person name="Teunissen H."/>
            <person name="Kujala P."/>
            <person name="Haegebarth A."/>
            <person name="Peters P.J."/>
            <person name="van de Wetering M."/>
            <person name="Stange D.E."/>
            <person name="van Es J.E."/>
            <person name="Guardavaccaro D."/>
            <person name="Schasfoort R.B."/>
            <person name="Mohri Y."/>
            <person name="Nishimori K."/>
            <person name="Mohammed S."/>
            <person name="Heck A.J."/>
            <person name="Clevers H."/>
        </authorList>
    </citation>
    <scope>FUNCTION</scope>
    <scope>DISRUPTION PHENOTYPE</scope>
</reference>
<reference key="8">
    <citation type="journal article" date="2012" name="EMBO J.">
        <title>Nuclear receptor binding protein 1 regulates intestinal progenitor cell homeostasis and tumour formation.</title>
        <authorList>
            <person name="Wilson C.H."/>
            <person name="Crombie C."/>
            <person name="van der Weyden L."/>
            <person name="Poulogiannis G."/>
            <person name="Rust A.G."/>
            <person name="Pardo M."/>
            <person name="Gracia T."/>
            <person name="Yu L."/>
            <person name="Choudhary J."/>
            <person name="Poulin G.B."/>
            <person name="McIntyre R.E."/>
            <person name="Winton D.J."/>
            <person name="March H.N."/>
            <person name="Arends M.J."/>
            <person name="Fraser A.G."/>
            <person name="Adams D.J."/>
        </authorList>
    </citation>
    <scope>TISSUE SPECIFICITY</scope>
</reference>
<reference key="9">
    <citation type="journal article" date="2018" name="Nature">
        <title>RSPO2 inhibition of RNF43 and ZNRF3 governs limb development independently of LGR4/5/6.</title>
        <authorList>
            <person name="Szenker-Ravi E."/>
            <person name="Altunoglu U."/>
            <person name="Leushacke M."/>
            <person name="Bosso-Lefevre C."/>
            <person name="Khatoo M."/>
            <person name="Thi Tran H."/>
            <person name="Naert T."/>
            <person name="Noelanders R."/>
            <person name="Hajamohideen A."/>
            <person name="Beneteau C."/>
            <person name="de Sousa S.B."/>
            <person name="Karaman B."/>
            <person name="Latypova X."/>
            <person name="Basaran S."/>
            <person name="Yuecel E.B."/>
            <person name="Tan T.T."/>
            <person name="Vlaminck L."/>
            <person name="Nayak S.S."/>
            <person name="Shukla A."/>
            <person name="Girisha K.M."/>
            <person name="Le Caignec C."/>
            <person name="Soshnikova N."/>
            <person name="Uyguner Z.O."/>
            <person name="Vleminckx K."/>
            <person name="Barker N."/>
            <person name="Kayserili H."/>
            <person name="Reversade B."/>
        </authorList>
    </citation>
    <scope>DISRUPTION PHENOTYPE</scope>
    <scope>DEVELOPMENTAL STAGE</scope>
</reference>
<protein>
    <recommendedName>
        <fullName>Leucine-rich repeat-containing G-protein coupled receptor 5</fullName>
    </recommendedName>
    <alternativeName>
        <fullName>G-protein coupled receptor 49</fullName>
    </alternativeName>
    <alternativeName>
        <fullName evidence="12">Orphan G-protein coupled receptor FEX</fullName>
    </alternativeName>
</protein>
<name>LGR5_MOUSE</name>
<dbReference type="EMBL" id="AF110818">
    <property type="protein sequence ID" value="AAD14684.1"/>
    <property type="molecule type" value="mRNA"/>
</dbReference>
<dbReference type="EMBL" id="AK132387">
    <property type="protein sequence ID" value="BAE21138.1"/>
    <property type="molecule type" value="mRNA"/>
</dbReference>
<dbReference type="EMBL" id="CH466539">
    <property type="protein sequence ID" value="EDL21773.1"/>
    <property type="molecule type" value="Genomic_DNA"/>
</dbReference>
<dbReference type="CCDS" id="CCDS24180.1"/>
<dbReference type="PIR" id="JG0193">
    <property type="entry name" value="JG0193"/>
</dbReference>
<dbReference type="RefSeq" id="NP_034325.2">
    <property type="nucleotide sequence ID" value="NM_010195.2"/>
</dbReference>
<dbReference type="SMR" id="Q9Z1P4"/>
<dbReference type="BioGRID" id="199635">
    <property type="interactions" value="3"/>
</dbReference>
<dbReference type="FunCoup" id="Q9Z1P4">
    <property type="interactions" value="800"/>
</dbReference>
<dbReference type="STRING" id="10090.ENSMUSP00000020350"/>
<dbReference type="GlyCosmos" id="Q9Z1P4">
    <property type="glycosylation" value="4 sites, No reported glycans"/>
</dbReference>
<dbReference type="GlyGen" id="Q9Z1P4">
    <property type="glycosylation" value="4 sites"/>
</dbReference>
<dbReference type="iPTMnet" id="Q9Z1P4"/>
<dbReference type="PhosphoSitePlus" id="Q9Z1P4"/>
<dbReference type="PaxDb" id="10090-ENSMUSP00000020350"/>
<dbReference type="ProteomicsDB" id="252468"/>
<dbReference type="Antibodypedia" id="1987">
    <property type="antibodies" value="952 antibodies from 43 providers"/>
</dbReference>
<dbReference type="DNASU" id="14160"/>
<dbReference type="Ensembl" id="ENSMUST00000020350.15">
    <property type="protein sequence ID" value="ENSMUSP00000020350.9"/>
    <property type="gene ID" value="ENSMUSG00000020140.16"/>
</dbReference>
<dbReference type="GeneID" id="14160"/>
<dbReference type="KEGG" id="mmu:14160"/>
<dbReference type="UCSC" id="uc007hbi.1">
    <property type="organism name" value="mouse"/>
</dbReference>
<dbReference type="AGR" id="MGI:1341817"/>
<dbReference type="CTD" id="8549"/>
<dbReference type="MGI" id="MGI:1341817">
    <property type="gene designation" value="Lgr5"/>
</dbReference>
<dbReference type="VEuPathDB" id="HostDB:ENSMUSG00000020140"/>
<dbReference type="eggNOG" id="KOG0619">
    <property type="taxonomic scope" value="Eukaryota"/>
</dbReference>
<dbReference type="eggNOG" id="KOG2087">
    <property type="taxonomic scope" value="Eukaryota"/>
</dbReference>
<dbReference type="GeneTree" id="ENSGT00940000160214"/>
<dbReference type="HOGENOM" id="CLU_006843_0_0_1"/>
<dbReference type="InParanoid" id="Q9Z1P4"/>
<dbReference type="OMA" id="PSSMGFM"/>
<dbReference type="OrthoDB" id="1883493at2759"/>
<dbReference type="PhylomeDB" id="Q9Z1P4"/>
<dbReference type="TreeFam" id="TF316814"/>
<dbReference type="Reactome" id="R-MMU-4641263">
    <property type="pathway name" value="Regulation of FZD by ubiquitination"/>
</dbReference>
<dbReference type="BioGRID-ORCS" id="14160">
    <property type="hits" value="1 hit in 77 CRISPR screens"/>
</dbReference>
<dbReference type="ChiTaRS" id="Lgr5">
    <property type="organism name" value="mouse"/>
</dbReference>
<dbReference type="PRO" id="PR:Q9Z1P4"/>
<dbReference type="Proteomes" id="UP000000589">
    <property type="component" value="Chromosome 10"/>
</dbReference>
<dbReference type="RNAct" id="Q9Z1P4">
    <property type="molecule type" value="protein"/>
</dbReference>
<dbReference type="Bgee" id="ENSMUSG00000020140">
    <property type="expression patterns" value="Expressed in crypt of Lieberkuhn of small intestine and 165 other cell types or tissues"/>
</dbReference>
<dbReference type="ExpressionAtlas" id="Q9Z1P4">
    <property type="expression patterns" value="baseline and differential"/>
</dbReference>
<dbReference type="GO" id="GO:0005886">
    <property type="term" value="C:plasma membrane"/>
    <property type="evidence" value="ECO:0000250"/>
    <property type="project" value="UniProtKB"/>
</dbReference>
<dbReference type="GO" id="GO:0032588">
    <property type="term" value="C:trans-Golgi network membrane"/>
    <property type="evidence" value="ECO:0000250"/>
    <property type="project" value="UniProtKB"/>
</dbReference>
<dbReference type="GO" id="GO:0016500">
    <property type="term" value="F:protein-hormone receptor activity"/>
    <property type="evidence" value="ECO:0007669"/>
    <property type="project" value="InterPro"/>
</dbReference>
<dbReference type="GO" id="GO:0004888">
    <property type="term" value="F:transmembrane signaling receptor activity"/>
    <property type="evidence" value="ECO:0000314"/>
    <property type="project" value="UniProtKB"/>
</dbReference>
<dbReference type="GO" id="GO:2001013">
    <property type="term" value="P:epithelial cell proliferation involved in renal tubule morphogenesis"/>
    <property type="evidence" value="ECO:0000316"/>
    <property type="project" value="MGI"/>
</dbReference>
<dbReference type="GO" id="GO:0007186">
    <property type="term" value="P:G protein-coupled receptor signaling pathway"/>
    <property type="evidence" value="ECO:0007669"/>
    <property type="project" value="UniProtKB-KW"/>
</dbReference>
<dbReference type="GO" id="GO:0001942">
    <property type="term" value="P:hair follicle development"/>
    <property type="evidence" value="ECO:0000316"/>
    <property type="project" value="MGI"/>
</dbReference>
<dbReference type="GO" id="GO:0048839">
    <property type="term" value="P:inner ear development"/>
    <property type="evidence" value="ECO:0000314"/>
    <property type="project" value="MGI"/>
</dbReference>
<dbReference type="GO" id="GO:0009994">
    <property type="term" value="P:oocyte differentiation"/>
    <property type="evidence" value="ECO:0000315"/>
    <property type="project" value="MGI"/>
</dbReference>
<dbReference type="GO" id="GO:0090263">
    <property type="term" value="P:positive regulation of canonical Wnt signaling pathway"/>
    <property type="evidence" value="ECO:0000315"/>
    <property type="project" value="UniProtKB"/>
</dbReference>
<dbReference type="GO" id="GO:0042127">
    <property type="term" value="P:regulation of cell population proliferation"/>
    <property type="evidence" value="ECO:0000316"/>
    <property type="project" value="MGI"/>
</dbReference>
<dbReference type="CDD" id="cd15363">
    <property type="entry name" value="7tmA_LGR5"/>
    <property type="match status" value="1"/>
</dbReference>
<dbReference type="FunFam" id="1.20.1070.10:FF:000028">
    <property type="entry name" value="leucine-rich repeat-containing G-protein coupled receptor 4 isoform X1"/>
    <property type="match status" value="1"/>
</dbReference>
<dbReference type="FunFam" id="3.80.10.10:FF:000028">
    <property type="entry name" value="leucine-rich repeat-containing G-protein coupled receptor 4 isoform X1"/>
    <property type="match status" value="1"/>
</dbReference>
<dbReference type="Gene3D" id="1.20.1070.10">
    <property type="entry name" value="Rhodopsin 7-helix transmembrane proteins"/>
    <property type="match status" value="1"/>
</dbReference>
<dbReference type="Gene3D" id="3.80.10.10">
    <property type="entry name" value="Ribonuclease Inhibitor"/>
    <property type="match status" value="1"/>
</dbReference>
<dbReference type="InterPro" id="IPR000276">
    <property type="entry name" value="GPCR_Rhodpsn"/>
</dbReference>
<dbReference type="InterPro" id="IPR017452">
    <property type="entry name" value="GPCR_Rhodpsn_7TM"/>
</dbReference>
<dbReference type="InterPro" id="IPR002131">
    <property type="entry name" value="Gphrmn_rcpt_fam"/>
</dbReference>
<dbReference type="InterPro" id="IPR001611">
    <property type="entry name" value="Leu-rich_rpt"/>
</dbReference>
<dbReference type="InterPro" id="IPR003591">
    <property type="entry name" value="Leu-rich_rpt_typical-subtyp"/>
</dbReference>
<dbReference type="InterPro" id="IPR032675">
    <property type="entry name" value="LRR_dom_sf"/>
</dbReference>
<dbReference type="InterPro" id="IPR000372">
    <property type="entry name" value="LRRNT"/>
</dbReference>
<dbReference type="PANTHER" id="PTHR24372:SF77">
    <property type="entry name" value="G-PROTEIN COUPLED RECEPTORS FAMILY 1 PROFILE DOMAIN-CONTAINING PROTEIN"/>
    <property type="match status" value="1"/>
</dbReference>
<dbReference type="PANTHER" id="PTHR24372">
    <property type="entry name" value="GLYCOPROTEIN HORMONE RECEPTOR"/>
    <property type="match status" value="1"/>
</dbReference>
<dbReference type="Pfam" id="PF00001">
    <property type="entry name" value="7tm_1"/>
    <property type="match status" value="1"/>
</dbReference>
<dbReference type="Pfam" id="PF13855">
    <property type="entry name" value="LRR_8"/>
    <property type="match status" value="4"/>
</dbReference>
<dbReference type="Pfam" id="PF01462">
    <property type="entry name" value="LRRNT"/>
    <property type="match status" value="1"/>
</dbReference>
<dbReference type="PRINTS" id="PR00373">
    <property type="entry name" value="GLYCHORMONER"/>
</dbReference>
<dbReference type="PRINTS" id="PR00237">
    <property type="entry name" value="GPCRRHODOPSN"/>
</dbReference>
<dbReference type="SMART" id="SM00364">
    <property type="entry name" value="LRR_BAC"/>
    <property type="match status" value="5"/>
</dbReference>
<dbReference type="SMART" id="SM00365">
    <property type="entry name" value="LRR_SD22"/>
    <property type="match status" value="5"/>
</dbReference>
<dbReference type="SMART" id="SM00369">
    <property type="entry name" value="LRR_TYP"/>
    <property type="match status" value="13"/>
</dbReference>
<dbReference type="SMART" id="SM00013">
    <property type="entry name" value="LRRNT"/>
    <property type="match status" value="1"/>
</dbReference>
<dbReference type="SUPFAM" id="SSF81321">
    <property type="entry name" value="Family A G protein-coupled receptor-like"/>
    <property type="match status" value="1"/>
</dbReference>
<dbReference type="SUPFAM" id="SSF52058">
    <property type="entry name" value="L domain-like"/>
    <property type="match status" value="2"/>
</dbReference>
<dbReference type="PROSITE" id="PS50262">
    <property type="entry name" value="G_PROTEIN_RECEP_F1_2"/>
    <property type="match status" value="1"/>
</dbReference>
<dbReference type="PROSITE" id="PS51450">
    <property type="entry name" value="LRR"/>
    <property type="match status" value="15"/>
</dbReference>
<keyword id="KW-1003">Cell membrane</keyword>
<keyword id="KW-1015">Disulfide bond</keyword>
<keyword id="KW-0297">G-protein coupled receptor</keyword>
<keyword id="KW-0325">Glycoprotein</keyword>
<keyword id="KW-0333">Golgi apparatus</keyword>
<keyword id="KW-0433">Leucine-rich repeat</keyword>
<keyword id="KW-0472">Membrane</keyword>
<keyword id="KW-0675">Receptor</keyword>
<keyword id="KW-1185">Reference proteome</keyword>
<keyword id="KW-0677">Repeat</keyword>
<keyword id="KW-0732">Signal</keyword>
<keyword id="KW-0807">Transducer</keyword>
<keyword id="KW-0812">Transmembrane</keyword>
<keyword id="KW-1133">Transmembrane helix</keyword>
<organism>
    <name type="scientific">Mus musculus</name>
    <name type="common">Mouse</name>
    <dbReference type="NCBI Taxonomy" id="10090"/>
    <lineage>
        <taxon>Eukaryota</taxon>
        <taxon>Metazoa</taxon>
        <taxon>Chordata</taxon>
        <taxon>Craniata</taxon>
        <taxon>Vertebrata</taxon>
        <taxon>Euteleostomi</taxon>
        <taxon>Mammalia</taxon>
        <taxon>Eutheria</taxon>
        <taxon>Euarchontoglires</taxon>
        <taxon>Glires</taxon>
        <taxon>Rodentia</taxon>
        <taxon>Myomorpha</taxon>
        <taxon>Muroidea</taxon>
        <taxon>Muridae</taxon>
        <taxon>Murinae</taxon>
        <taxon>Mus</taxon>
        <taxon>Mus</taxon>
    </lineage>
</organism>
<feature type="signal peptide" evidence="3">
    <location>
        <begin position="1"/>
        <end position="21"/>
    </location>
</feature>
<feature type="chain" id="PRO_0000012795" description="Leucine-rich repeat-containing G-protein coupled receptor 5">
    <location>
        <begin position="22"/>
        <end position="907"/>
    </location>
</feature>
<feature type="topological domain" description="Extracellular" evidence="3">
    <location>
        <begin position="22"/>
        <end position="561"/>
    </location>
</feature>
<feature type="transmembrane region" description="Helical; Name=1" evidence="3">
    <location>
        <begin position="562"/>
        <end position="582"/>
    </location>
</feature>
<feature type="topological domain" description="Cytoplasmic" evidence="3">
    <location>
        <begin position="583"/>
        <end position="593"/>
    </location>
</feature>
<feature type="transmembrane region" description="Helical; Name=2" evidence="3">
    <location>
        <begin position="594"/>
        <end position="614"/>
    </location>
</feature>
<feature type="topological domain" description="Extracellular" evidence="3">
    <location>
        <begin position="615"/>
        <end position="638"/>
    </location>
</feature>
<feature type="transmembrane region" description="Helical; Name=3" evidence="3">
    <location>
        <begin position="639"/>
        <end position="659"/>
    </location>
</feature>
<feature type="topological domain" description="Cytoplasmic" evidence="3">
    <location>
        <begin position="660"/>
        <end position="682"/>
    </location>
</feature>
<feature type="transmembrane region" description="Helical; Name=4" evidence="3">
    <location>
        <begin position="683"/>
        <end position="703"/>
    </location>
</feature>
<feature type="topological domain" description="Extracellular" evidence="3">
    <location>
        <begin position="704"/>
        <end position="723"/>
    </location>
</feature>
<feature type="transmembrane region" description="Helical; Name=5" evidence="3">
    <location>
        <begin position="724"/>
        <end position="744"/>
    </location>
</feature>
<feature type="topological domain" description="Cytoplasmic" evidence="3">
    <location>
        <begin position="745"/>
        <end position="767"/>
    </location>
</feature>
<feature type="transmembrane region" description="Helical; Name=6" evidence="3">
    <location>
        <begin position="768"/>
        <end position="788"/>
    </location>
</feature>
<feature type="topological domain" description="Extracellular" evidence="3">
    <location>
        <begin position="789"/>
        <end position="802"/>
    </location>
</feature>
<feature type="transmembrane region" description="Helical; Name=7" evidence="3">
    <location>
        <begin position="803"/>
        <end position="823"/>
    </location>
</feature>
<feature type="topological domain" description="Cytoplasmic" evidence="3">
    <location>
        <begin position="824"/>
        <end position="907"/>
    </location>
</feature>
<feature type="domain" description="LRRNT">
    <location>
        <begin position="25"/>
        <end position="66"/>
    </location>
</feature>
<feature type="repeat" description="LRR 1">
    <location>
        <begin position="67"/>
        <end position="88"/>
    </location>
</feature>
<feature type="repeat" description="LRR 2">
    <location>
        <begin position="91"/>
        <end position="112"/>
    </location>
</feature>
<feature type="repeat" description="LRR 3">
    <location>
        <begin position="115"/>
        <end position="136"/>
    </location>
</feature>
<feature type="repeat" description="LRR 4">
    <location>
        <begin position="139"/>
        <end position="160"/>
    </location>
</feature>
<feature type="repeat" description="LRR 5">
    <location>
        <begin position="163"/>
        <end position="184"/>
    </location>
</feature>
<feature type="repeat" description="LRR 6">
    <location>
        <begin position="187"/>
        <end position="208"/>
    </location>
</feature>
<feature type="repeat" description="LRR 7">
    <location>
        <begin position="211"/>
        <end position="232"/>
    </location>
</feature>
<feature type="repeat" description="LRR 8">
    <location>
        <begin position="235"/>
        <end position="256"/>
    </location>
</feature>
<feature type="repeat" description="LRR 9">
    <location>
        <begin position="258"/>
        <end position="279"/>
    </location>
</feature>
<feature type="repeat" description="LRR 10">
    <location>
        <begin position="282"/>
        <end position="303"/>
    </location>
</feature>
<feature type="repeat" description="LRR 11">
    <location>
        <begin position="306"/>
        <end position="325"/>
    </location>
</feature>
<feature type="repeat" description="LRR 12">
    <location>
        <begin position="329"/>
        <end position="350"/>
    </location>
</feature>
<feature type="repeat" description="LRR 13">
    <location>
        <begin position="353"/>
        <end position="374"/>
    </location>
</feature>
<feature type="repeat" description="LRR 14">
    <location>
        <begin position="375"/>
        <end position="396"/>
    </location>
</feature>
<feature type="repeat" description="LRR 15">
    <location>
        <begin position="399"/>
        <end position="420"/>
    </location>
</feature>
<feature type="repeat" description="LRR 16">
    <location>
        <begin position="423"/>
        <end position="446"/>
    </location>
</feature>
<feature type="glycosylation site" description="N-linked (GlcNAc...) asparagine" evidence="3">
    <location>
        <position position="63"/>
    </location>
</feature>
<feature type="glycosylation site" description="N-linked (GlcNAc...) asparagine" evidence="3">
    <location>
        <position position="77"/>
    </location>
</feature>
<feature type="glycosylation site" description="N-linked (GlcNAc...) asparagine" evidence="3">
    <location>
        <position position="208"/>
    </location>
</feature>
<feature type="glycosylation site" description="N-linked (GlcNAc...) asparagine" evidence="3">
    <location>
        <position position="792"/>
    </location>
</feature>
<feature type="disulfide bond" evidence="4">
    <location>
        <begin position="34"/>
        <end position="40"/>
    </location>
</feature>
<feature type="disulfide bond" evidence="4">
    <location>
        <begin position="38"/>
        <end position="52"/>
    </location>
</feature>
<feature type="disulfide bond" evidence="4">
    <location>
        <begin position="348"/>
        <end position="373"/>
    </location>
</feature>
<feature type="disulfide bond" evidence="4">
    <location>
        <begin position="479"/>
        <end position="541"/>
    </location>
</feature>
<feature type="disulfide bond" evidence="4">
    <location>
        <begin position="637"/>
        <end position="712"/>
    </location>
</feature>
<feature type="sequence conflict" description="In Ref. 1; AAD14684." evidence="13" ref="1">
    <original>Q</original>
    <variation>K</variation>
    <location>
        <position position="128"/>
    </location>
</feature>
<feature type="sequence conflict" description="In Ref. 1; AAD14684." evidence="13" ref="1">
    <original>K</original>
    <variation>N</variation>
    <location>
        <position position="534"/>
    </location>
</feature>
<feature type="sequence conflict" description="In Ref. 1; AAD14684." evidence="13" ref="1">
    <original>A</original>
    <variation>T</variation>
    <location>
        <position position="571"/>
    </location>
</feature>
<comment type="function">
    <text evidence="8">Receptor for R-spondins that potentiates the canonical Wnt signaling pathway and acts as a stem cell marker of the intestinal epithelium and the hair follicle. Upon binding to R-spondins (RSPO1, RSPO2, RSPO3 or RSPO4), associates with phosphorylated LRP6 and frizzled receptors that are activated by extracellular Wnt receptors, triggering the canonical Wnt signaling pathway to increase expression of target genes. In contrast to classical G-protein coupled receptors, does not activate heterotrimeric G-proteins to transduce the signal. Involved in the development and/or maintenance of the adult intestinal stem cells during postembryonic development.</text>
</comment>
<comment type="subunit">
    <text evidence="2">Identified in a complex composed of RNF43, LGR5 and RSPO1 (By similarity). Also interacts with other R-spondin ligands, including RSPO2, RSPO3 and RSPO4 (By similarity).</text>
</comment>
<comment type="subcellular location">
    <subcellularLocation>
        <location>Cell membrane</location>
        <topology>Multi-pass membrane protein</topology>
    </subcellularLocation>
    <subcellularLocation>
        <location evidence="1">Golgi apparatus</location>
        <location evidence="1">trans-Golgi network membrane</location>
        <topology evidence="1">Multi-pass membrane protein</topology>
    </subcellularLocation>
    <text evidence="1">Rapidly and constitutively internalized to the trans-Golgi network at steady state.</text>
</comment>
<comment type="tissue specificity">
    <text evidence="6 7 9 11">Expressed in the intestinal epithelium (at protein level) (PubMed:22510880). Expressed in the gonads, the adrenal gland, and in the brain. In the central nervous system expression is restricted to the olfactory bulb. In the adrenal gland detected only in the neural-crest derived chromaffin cells of the medulla, but not in the cells of the adrenal cortex. In the gonads, the expression is high in Graafian follicle, but absent from primary and secondary follicles. In the intestine, exclusively expressed in cycling crypt base columnar cells. Expressed in the lower bulge and secondary germ area of telogen hair follicles and in the lower outer root sheath of anagen hair follicle.</text>
</comment>
<comment type="developmental stage">
    <text evidence="10 11">First expressed at 8.5 dpc in a few cells of the ectoplacental cone and, at 9.5 dpc, in a greater number of cells in the labyrinthine region of the forming placenta. In the embryo per se, expression starts at 9.5 dpc. At 10.5 dpc, detected in the facial area in the tissue overlaying the mandibular cleft and in the optic cup. In the central nervous system, expressed in the neuroepithelium at the roof of the mesencephalon and in the spinal cord. At 11.5 dpc, in the central nervous system, expressed in the neuroepithelium at the border between mes- and metencephalon and that lining the fourth ventricle and the retina, as well as in the spinal cord. Outside the nervous system, at 11.5 dpc, expressed in the mesenchyme over-laying the mandibular cleft, in the distal limb buds, especially the hind limb buds, as well as in the perichordal mesenchyme in the rostral region of the embryo. At 12.5 dpc, in the central nervous system, highly expressed in the rhombencephalic isthmus. In the facial area, expressed in the mesenchyme surrounding the olfactory epithelium and the forming vibrissae. Expression in the hind and front limb buds increases and spreads to more proximal directions, but is restricted to the area were the digits develop. At 13.5 dpc, the expression in the brain becomes restricted to the border between mes- and diencephalon. Also detected in the pituitary. Strongly expressed in the mesenchyme adjacent to the mandibular cleft, as well as in the most lateral aspects of the tongue and the teeth anlagen. Weak expression in the body wall and mesenchyme surrounding internal organs. At 14.5 dpc, becomes hardly detectable in the nervous system. In the body, expressed in the perichondrium, but levels decrease with ongoing age (PubMed:9920770). In the limbs, at 14.5 dpc, expressed in the mesenchyme, but not in the overlying ectoderm of the limb bud. In developing lungs, at 14.5 dpc, expressed at low levels in both the epithelium and mesenchyme lineages (PubMed:29769720).</text>
</comment>
<comment type="disruption phenotype">
    <text evidence="5 8 10">Mice exhibit malformation of the tongue and of lower jam causing newborns to swallow air leading to 100% neonatal lethality. Conditional knockout of both Lgr4 and Lgr5 in the gut results in Wnt signaling inhibition and results in the rapid demise of intestinal crypts (PubMed:21727895). Simultaneous knockdown of LGR4, LGR5 and LGR6 results in developmental phenotypes, such as cleft palate and ankyloglossia, but not in tetra-amelia with lung agenesis (PubMed:29769720).</text>
</comment>
<comment type="miscellaneous">
    <text evidence="14">LGR5 is used as a marker of adult tissue stem cells in the intestine, stomach, hair follicle, and mammary epithelium.</text>
</comment>
<comment type="similarity">
    <text evidence="4">Belongs to the G-protein coupled receptor 1 family.</text>
</comment>
<evidence type="ECO:0000250" key="1"/>
<evidence type="ECO:0000250" key="2">
    <source>
        <dbReference type="UniProtKB" id="O75473"/>
    </source>
</evidence>
<evidence type="ECO:0000255" key="3"/>
<evidence type="ECO:0000255" key="4">
    <source>
        <dbReference type="PROSITE-ProRule" id="PRU00521"/>
    </source>
</evidence>
<evidence type="ECO:0000269" key="5">
    <source>
    </source>
</evidence>
<evidence type="ECO:0000269" key="6">
    <source>
    </source>
</evidence>
<evidence type="ECO:0000269" key="7">
    <source>
    </source>
</evidence>
<evidence type="ECO:0000269" key="8">
    <source>
    </source>
</evidence>
<evidence type="ECO:0000269" key="9">
    <source>
    </source>
</evidence>
<evidence type="ECO:0000269" key="10">
    <source>
    </source>
</evidence>
<evidence type="ECO:0000269" key="11">
    <source>
    </source>
</evidence>
<evidence type="ECO:0000303" key="12">
    <source>
    </source>
</evidence>
<evidence type="ECO:0000305" key="13"/>
<evidence type="ECO:0000305" key="14">
    <source>
    </source>
</evidence>
<accession>Q9Z1P4</accession>
<accession>Q3V1L2</accession>